<comment type="catalytic activity">
    <reaction evidence="1">
        <text>1-(5-phospho-beta-D-ribosyl)-5-[(5-phospho-beta-D-ribosylamino)methylideneamino]imidazole-4-carboxamide = 5-[(5-phospho-1-deoxy-D-ribulos-1-ylimino)methylamino]-1-(5-phospho-beta-D-ribosyl)imidazole-4-carboxamide</text>
        <dbReference type="Rhea" id="RHEA:15469"/>
        <dbReference type="ChEBI" id="CHEBI:58435"/>
        <dbReference type="ChEBI" id="CHEBI:58525"/>
        <dbReference type="EC" id="5.3.1.16"/>
    </reaction>
</comment>
<comment type="pathway">
    <text evidence="1">Amino-acid biosynthesis; L-histidine biosynthesis; L-histidine from 5-phospho-alpha-D-ribose 1-diphosphate: step 4/9.</text>
</comment>
<comment type="subcellular location">
    <subcellularLocation>
        <location evidence="1">Cytoplasm</location>
    </subcellularLocation>
</comment>
<comment type="similarity">
    <text evidence="1">Belongs to the HisA/HisF family.</text>
</comment>
<evidence type="ECO:0000255" key="1">
    <source>
        <dbReference type="HAMAP-Rule" id="MF_01014"/>
    </source>
</evidence>
<name>HIS4_METAR</name>
<feature type="chain" id="PRO_0000290579" description="1-(5-phosphoribosyl)-5-[(5-phosphoribosylamino)methylideneamino] imidazole-4-carboxamide isomerase">
    <location>
        <begin position="1"/>
        <end position="240"/>
    </location>
</feature>
<feature type="active site" description="Proton acceptor" evidence="1">
    <location>
        <position position="10"/>
    </location>
</feature>
<feature type="active site" description="Proton donor" evidence="1">
    <location>
        <position position="132"/>
    </location>
</feature>
<protein>
    <recommendedName>
        <fullName evidence="1">1-(5-phosphoribosyl)-5-[(5-phosphoribosylamino)methylideneamino] imidazole-4-carboxamide isomerase</fullName>
        <ecNumber evidence="1">5.3.1.16</ecNumber>
    </recommendedName>
    <alternativeName>
        <fullName evidence="1">Phosphoribosylformimino-5-aminoimidazole carboxamide ribotide isomerase</fullName>
    </alternativeName>
</protein>
<organism>
    <name type="scientific">Methanocella arvoryzae (strain DSM 22066 / NBRC 105507 / MRE50)</name>
    <dbReference type="NCBI Taxonomy" id="351160"/>
    <lineage>
        <taxon>Archaea</taxon>
        <taxon>Methanobacteriati</taxon>
        <taxon>Methanobacteriota</taxon>
        <taxon>Stenosarchaea group</taxon>
        <taxon>Methanomicrobia</taxon>
        <taxon>Methanocellales</taxon>
        <taxon>Methanocellaceae</taxon>
        <taxon>Methanocella</taxon>
    </lineage>
</organism>
<keyword id="KW-0028">Amino-acid biosynthesis</keyword>
<keyword id="KW-0963">Cytoplasm</keyword>
<keyword id="KW-0368">Histidine biosynthesis</keyword>
<keyword id="KW-0413">Isomerase</keyword>
<keyword id="KW-1185">Reference proteome</keyword>
<proteinExistence type="inferred from homology"/>
<sequence length="240" mass="25255">MSFNVIPAIDLKGGKCVQLVQGVPGTEMVSIDDAVEVAAGWVGQGAKTLHIIDLDGAFSGSRKNAYIMEDIVSKFDVDVQVGGGIRDYETAKYLLSLGIDRVILGTAAIKNPDLVRQLADEFGSETVMVSLDSKQGEVVIEGWTESSGKTTNEMGKFFSEIGAGSILYTNVDVEGLLKGVNEDPVRSLVNSVTIPVIASGGVAKIDDLVKIKNTGAAGVVVGSALYKGLFTLREAIDKVS</sequence>
<accession>Q0W0J3</accession>
<dbReference type="EC" id="5.3.1.16" evidence="1"/>
<dbReference type="EMBL" id="AM114193">
    <property type="protein sequence ID" value="CAJ38100.1"/>
    <property type="molecule type" value="Genomic_DNA"/>
</dbReference>
<dbReference type="RefSeq" id="WP_012034491.1">
    <property type="nucleotide sequence ID" value="NC_009464.1"/>
</dbReference>
<dbReference type="SMR" id="Q0W0J3"/>
<dbReference type="STRING" id="351160.RRC389"/>
<dbReference type="GeneID" id="5144440"/>
<dbReference type="KEGG" id="rci:RRC389"/>
<dbReference type="PATRIC" id="fig|351160.9.peg.173"/>
<dbReference type="eggNOG" id="arCOG00618">
    <property type="taxonomic scope" value="Archaea"/>
</dbReference>
<dbReference type="OrthoDB" id="52866at2157"/>
<dbReference type="UniPathway" id="UPA00031">
    <property type="reaction ID" value="UER00009"/>
</dbReference>
<dbReference type="Proteomes" id="UP000000663">
    <property type="component" value="Chromosome"/>
</dbReference>
<dbReference type="GO" id="GO:0005737">
    <property type="term" value="C:cytoplasm"/>
    <property type="evidence" value="ECO:0007669"/>
    <property type="project" value="UniProtKB-SubCell"/>
</dbReference>
<dbReference type="GO" id="GO:0003949">
    <property type="term" value="F:1-(5-phosphoribosyl)-5-[(5-phosphoribosylamino)methylideneamino]imidazole-4-carboxamide isomerase activity"/>
    <property type="evidence" value="ECO:0007669"/>
    <property type="project" value="UniProtKB-UniRule"/>
</dbReference>
<dbReference type="GO" id="GO:0000105">
    <property type="term" value="P:L-histidine biosynthetic process"/>
    <property type="evidence" value="ECO:0007669"/>
    <property type="project" value="UniProtKB-UniRule"/>
</dbReference>
<dbReference type="GO" id="GO:0000162">
    <property type="term" value="P:L-tryptophan biosynthetic process"/>
    <property type="evidence" value="ECO:0007669"/>
    <property type="project" value="TreeGrafter"/>
</dbReference>
<dbReference type="CDD" id="cd04732">
    <property type="entry name" value="HisA"/>
    <property type="match status" value="1"/>
</dbReference>
<dbReference type="FunFam" id="3.20.20.70:FF:000009">
    <property type="entry name" value="1-(5-phosphoribosyl)-5-[(5-phosphoribosylamino)methylideneamino] imidazole-4-carboxamide isomerase"/>
    <property type="match status" value="1"/>
</dbReference>
<dbReference type="Gene3D" id="3.20.20.70">
    <property type="entry name" value="Aldolase class I"/>
    <property type="match status" value="1"/>
</dbReference>
<dbReference type="HAMAP" id="MF_01014">
    <property type="entry name" value="HisA"/>
    <property type="match status" value="1"/>
</dbReference>
<dbReference type="InterPro" id="IPR013785">
    <property type="entry name" value="Aldolase_TIM"/>
</dbReference>
<dbReference type="InterPro" id="IPR006062">
    <property type="entry name" value="His_biosynth"/>
</dbReference>
<dbReference type="InterPro" id="IPR006063">
    <property type="entry name" value="HisA_bact_arch"/>
</dbReference>
<dbReference type="InterPro" id="IPR044524">
    <property type="entry name" value="Isoase_HisA-like"/>
</dbReference>
<dbReference type="InterPro" id="IPR023016">
    <property type="entry name" value="Isoase_HisA-like_bact"/>
</dbReference>
<dbReference type="InterPro" id="IPR011060">
    <property type="entry name" value="RibuloseP-bd_barrel"/>
</dbReference>
<dbReference type="NCBIfam" id="TIGR00007">
    <property type="entry name" value="1-(5-phosphoribosyl)-5-[(5-phosphoribosylamino)methylideneamino]imidazole-4-carboxamide isomerase"/>
    <property type="match status" value="1"/>
</dbReference>
<dbReference type="NCBIfam" id="NF010112">
    <property type="entry name" value="PRK13585.1"/>
    <property type="match status" value="1"/>
</dbReference>
<dbReference type="PANTHER" id="PTHR43090">
    <property type="entry name" value="1-(5-PHOSPHORIBOSYL)-5-[(5-PHOSPHORIBOSYLAMINO)METHYLIDENEAMINO] IMIDAZOLE-4-CARBOXAMIDE ISOMERASE"/>
    <property type="match status" value="1"/>
</dbReference>
<dbReference type="PANTHER" id="PTHR43090:SF7">
    <property type="entry name" value="1-(5-PHOSPHORIBOSYL)-5-[(5-PHOSPHORIBOSYLAMINO)METHYLIDENEAMINO] IMIDAZOLE-4-CARBOXAMIDE ISOMERASE"/>
    <property type="match status" value="1"/>
</dbReference>
<dbReference type="Pfam" id="PF00977">
    <property type="entry name" value="His_biosynth"/>
    <property type="match status" value="1"/>
</dbReference>
<dbReference type="SUPFAM" id="SSF51366">
    <property type="entry name" value="Ribulose-phoshate binding barrel"/>
    <property type="match status" value="1"/>
</dbReference>
<gene>
    <name evidence="1" type="primary">hisA</name>
    <name type="ordered locus">UNCMA_01660</name>
    <name type="ORF">RRC389</name>
</gene>
<reference key="1">
    <citation type="journal article" date="2006" name="Science">
        <title>Genome of rice cluster I archaea -- the key methane producers in the rice rhizosphere.</title>
        <authorList>
            <person name="Erkel C."/>
            <person name="Kube M."/>
            <person name="Reinhardt R."/>
            <person name="Liesack W."/>
        </authorList>
    </citation>
    <scope>NUCLEOTIDE SEQUENCE [LARGE SCALE GENOMIC DNA]</scope>
    <source>
        <strain>DSM 22066 / NBRC 105507 / MRE50</strain>
    </source>
</reference>